<accession>Q9SLA2</accession>
<reference key="1">
    <citation type="journal article" date="1999" name="Nature">
        <title>Sequence and analysis of chromosome 2 of the plant Arabidopsis thaliana.</title>
        <authorList>
            <person name="Lin X."/>
            <person name="Kaul S."/>
            <person name="Rounsley S.D."/>
            <person name="Shea T.P."/>
            <person name="Benito M.-I."/>
            <person name="Town C.D."/>
            <person name="Fujii C.Y."/>
            <person name="Mason T.M."/>
            <person name="Bowman C.L."/>
            <person name="Barnstead M.E."/>
            <person name="Feldblyum T.V."/>
            <person name="Buell C.R."/>
            <person name="Ketchum K.A."/>
            <person name="Lee J.J."/>
            <person name="Ronning C.M."/>
            <person name="Koo H.L."/>
            <person name="Moffat K.S."/>
            <person name="Cronin L.A."/>
            <person name="Shen M."/>
            <person name="Pai G."/>
            <person name="Van Aken S."/>
            <person name="Umayam L."/>
            <person name="Tallon L.J."/>
            <person name="Gill J.E."/>
            <person name="Adams M.D."/>
            <person name="Carrera A.J."/>
            <person name="Creasy T.H."/>
            <person name="Goodman H.M."/>
            <person name="Somerville C.R."/>
            <person name="Copenhaver G.P."/>
            <person name="Preuss D."/>
            <person name="Nierman W.C."/>
            <person name="White O."/>
            <person name="Eisen J.A."/>
            <person name="Salzberg S.L."/>
            <person name="Fraser C.M."/>
            <person name="Venter J.C."/>
        </authorList>
    </citation>
    <scope>NUCLEOTIDE SEQUENCE [LARGE SCALE GENOMIC DNA]</scope>
    <source>
        <strain>cv. Columbia</strain>
    </source>
</reference>
<reference key="2">
    <citation type="journal article" date="2017" name="Plant J.">
        <title>Araport11: a complete reannotation of the Arabidopsis thaliana reference genome.</title>
        <authorList>
            <person name="Cheng C.Y."/>
            <person name="Krishnakumar V."/>
            <person name="Chan A.P."/>
            <person name="Thibaud-Nissen F."/>
            <person name="Schobel S."/>
            <person name="Town C.D."/>
        </authorList>
    </citation>
    <scope>GENOME REANNOTATION</scope>
    <source>
        <strain>cv. Columbia</strain>
    </source>
</reference>
<reference key="3">
    <citation type="submission" date="2006-07" db="EMBL/GenBank/DDBJ databases">
        <title>Arabidopsis ORF clones.</title>
        <authorList>
            <person name="Kim C.J."/>
            <person name="Chen H."/>
            <person name="Quinitio C."/>
            <person name="Shinn P."/>
            <person name="Ecker J.R."/>
        </authorList>
    </citation>
    <scope>NUCLEOTIDE SEQUENCE [LARGE SCALE MRNA]</scope>
    <source>
        <strain>cv. Columbia</strain>
    </source>
</reference>
<reference key="4">
    <citation type="submission" date="2002-03" db="EMBL/GenBank/DDBJ databases">
        <title>Full-length cDNA from Arabidopsis thaliana.</title>
        <authorList>
            <person name="Brover V.V."/>
            <person name="Troukhan M.E."/>
            <person name="Alexandrov N.A."/>
            <person name="Lu Y.-P."/>
            <person name="Flavell R.B."/>
            <person name="Feldmann K.A."/>
        </authorList>
    </citation>
    <scope>NUCLEOTIDE SEQUENCE [LARGE SCALE MRNA]</scope>
</reference>
<reference key="5">
    <citation type="journal article" date="2002" name="Trends Plant Sci.">
        <title>A simple nomenclature for a complex proton pump: VHA genes encode the vacuolar H(+)-ATPase.</title>
        <authorList>
            <person name="Sze H."/>
            <person name="Schumacher K."/>
            <person name="Mueller M.L."/>
            <person name="Padmanaban S."/>
            <person name="Taiz L."/>
        </authorList>
    </citation>
    <scope>GENE FAMILY</scope>
    <scope>NOMENCLATURE</scope>
</reference>
<reference key="6">
    <citation type="journal article" date="2008" name="BMC Cell Biol.">
        <title>Organelle-specific isoenzymes of plant V-ATPase as revealed by in vivo-FRET analysis.</title>
        <authorList>
            <person name="Seidel T."/>
            <person name="Schnitzer D."/>
            <person name="Golldack D."/>
            <person name="Sauer M."/>
            <person name="Dietz K.J."/>
        </authorList>
    </citation>
    <scope>SUBCELLULAR LOCATION</scope>
    <scope>TOPOLOGY</scope>
</reference>
<reference key="7">
    <citation type="journal article" date="2012" name="J. Integr. Plant Biol.">
        <title>Four closely-related RING-type E3 ligases, APD1-4, are involved in pollen mitosis II regulation in Arabidopsis.</title>
        <authorList>
            <person name="Luo G."/>
            <person name="Gu H."/>
            <person name="Liu J."/>
            <person name="Qu L.-J."/>
        </authorList>
    </citation>
    <scope>INTERACTION WITH APD2</scope>
    <source>
        <strain>cv. Columbia</strain>
    </source>
</reference>
<proteinExistence type="evidence at protein level"/>
<gene>
    <name type="primary">VHA-c''2</name>
    <name type="synonym">VMA16</name>
    <name type="ordered locus">At2g25610</name>
    <name type="ORF">F3N11.6</name>
</gene>
<evidence type="ECO:0000250" key="1"/>
<evidence type="ECO:0000255" key="2"/>
<evidence type="ECO:0000269" key="3">
    <source>
    </source>
</evidence>
<evidence type="ECO:0000269" key="4">
    <source>
    </source>
</evidence>
<evidence type="ECO:0000305" key="5"/>
<name>VATO2_ARATH</name>
<protein>
    <recommendedName>
        <fullName>V-type proton ATPase subunit c''2</fullName>
        <shortName>V-ATPase subunit c''2</shortName>
    </recommendedName>
    <alternativeName>
        <fullName>Vacuolar H(+)-ATPase subunit c'' isoform 2</fullName>
    </alternativeName>
    <alternativeName>
        <fullName>Vacuolar proton pump subunit c''2</fullName>
    </alternativeName>
</protein>
<feature type="chain" id="PRO_0000430416" description="V-type proton ATPase subunit c''2">
    <location>
        <begin position="1"/>
        <end position="178"/>
    </location>
</feature>
<feature type="topological domain" description="Lumenal" evidence="2">
    <location>
        <begin position="1"/>
        <end position="24"/>
    </location>
</feature>
<feature type="transmembrane region" description="Helical; Name=1" evidence="2">
    <location>
        <begin position="25"/>
        <end position="45"/>
    </location>
</feature>
<feature type="topological domain" description="Cytoplasmic" evidence="2">
    <location>
        <begin position="46"/>
        <end position="64"/>
    </location>
</feature>
<feature type="transmembrane region" description="Helical; Name=2" evidence="2">
    <location>
        <begin position="65"/>
        <end position="85"/>
    </location>
</feature>
<feature type="topological domain" description="Lumenal" evidence="2">
    <location>
        <begin position="86"/>
        <end position="108"/>
    </location>
</feature>
<feature type="transmembrane region" description="Helical; Name=3" evidence="2">
    <location>
        <begin position="109"/>
        <end position="129"/>
    </location>
</feature>
<feature type="topological domain" description="Cytoplasmic" evidence="2">
    <location>
        <begin position="130"/>
        <end position="147"/>
    </location>
</feature>
<feature type="transmembrane region" description="Helical; Name=4" evidence="2">
    <location>
        <begin position="148"/>
        <end position="168"/>
    </location>
</feature>
<feature type="topological domain" description="Lumenal" evidence="2">
    <location>
        <begin position="169"/>
        <end position="178"/>
    </location>
</feature>
<feature type="site" description="Essential for proton translocation" evidence="1">
    <location>
        <position position="72"/>
    </location>
</feature>
<sequence length="178" mass="18219">MSGVAIHASSWGAALVRISPYTFSAIGIAISIGVSVLGAAWGIYITGSSLIGAAIEAPRITSKNLISVIFCEAVAIYGVIVAIILQTKLESVPSSKMYDAESLRAGYAIFASGIIVGFANLVCGLCVGIIGSSCALSDAQNSTLFVKILVIEIFGSALGLFGVIVGIIMSAQATWPTK</sequence>
<dbReference type="EMBL" id="AC006053">
    <property type="protein sequence ID" value="AAD31363.1"/>
    <property type="molecule type" value="Genomic_DNA"/>
</dbReference>
<dbReference type="EMBL" id="CP002685">
    <property type="protein sequence ID" value="AEC07724.1"/>
    <property type="molecule type" value="Genomic_DNA"/>
</dbReference>
<dbReference type="EMBL" id="BT026106">
    <property type="protein sequence ID" value="ABG48462.1"/>
    <property type="molecule type" value="mRNA"/>
</dbReference>
<dbReference type="EMBL" id="AY084540">
    <property type="protein sequence ID" value="AAM61108.1"/>
    <property type="molecule type" value="mRNA"/>
</dbReference>
<dbReference type="PIR" id="E84650">
    <property type="entry name" value="E84650"/>
</dbReference>
<dbReference type="RefSeq" id="NP_180132.1">
    <property type="nucleotide sequence ID" value="NM_128119.2"/>
</dbReference>
<dbReference type="SMR" id="Q9SLA2"/>
<dbReference type="FunCoup" id="Q9SLA2">
    <property type="interactions" value="3412"/>
</dbReference>
<dbReference type="STRING" id="3702.Q9SLA2"/>
<dbReference type="PaxDb" id="3702-AT2G25610.1"/>
<dbReference type="ProteomicsDB" id="228581"/>
<dbReference type="EnsemblPlants" id="AT2G25610.1">
    <property type="protein sequence ID" value="AT2G25610.1"/>
    <property type="gene ID" value="AT2G25610"/>
</dbReference>
<dbReference type="GeneID" id="817101"/>
<dbReference type="Gramene" id="AT2G25610.1">
    <property type="protein sequence ID" value="AT2G25610.1"/>
    <property type="gene ID" value="AT2G25610"/>
</dbReference>
<dbReference type="KEGG" id="ath:AT2G25610"/>
<dbReference type="Araport" id="AT2G25610"/>
<dbReference type="TAIR" id="AT2G25610"/>
<dbReference type="eggNOG" id="KOG0233">
    <property type="taxonomic scope" value="Eukaryota"/>
</dbReference>
<dbReference type="HOGENOM" id="CLU_085752_0_1_1"/>
<dbReference type="InParanoid" id="Q9SLA2"/>
<dbReference type="OrthoDB" id="1090203at2759"/>
<dbReference type="PhylomeDB" id="Q9SLA2"/>
<dbReference type="PRO" id="PR:Q9SLA2"/>
<dbReference type="Proteomes" id="UP000006548">
    <property type="component" value="Chromosome 2"/>
</dbReference>
<dbReference type="ExpressionAtlas" id="Q9SLA2">
    <property type="expression patterns" value="baseline and differential"/>
</dbReference>
<dbReference type="GO" id="GO:0005789">
    <property type="term" value="C:endoplasmic reticulum membrane"/>
    <property type="evidence" value="ECO:0007669"/>
    <property type="project" value="UniProtKB-SubCell"/>
</dbReference>
<dbReference type="GO" id="GO:0000139">
    <property type="term" value="C:Golgi membrane"/>
    <property type="evidence" value="ECO:0007669"/>
    <property type="project" value="UniProtKB-SubCell"/>
</dbReference>
<dbReference type="GO" id="GO:0033179">
    <property type="term" value="C:proton-transporting V-type ATPase, V0 domain"/>
    <property type="evidence" value="ECO:0007669"/>
    <property type="project" value="InterPro"/>
</dbReference>
<dbReference type="GO" id="GO:0005773">
    <property type="term" value="C:vacuole"/>
    <property type="evidence" value="ECO:0007005"/>
    <property type="project" value="TAIR"/>
</dbReference>
<dbReference type="GO" id="GO:0046961">
    <property type="term" value="F:proton-transporting ATPase activity, rotational mechanism"/>
    <property type="evidence" value="ECO:0007669"/>
    <property type="project" value="InterPro"/>
</dbReference>
<dbReference type="CDD" id="cd18177">
    <property type="entry name" value="ATP-synt_Vo_c_ATP6F_rpt1"/>
    <property type="match status" value="1"/>
</dbReference>
<dbReference type="CDD" id="cd18178">
    <property type="entry name" value="ATP-synt_Vo_c_ATP6F_rpt2"/>
    <property type="match status" value="1"/>
</dbReference>
<dbReference type="FunFam" id="1.20.120.610:FF:000002">
    <property type="entry name" value="V-type proton ATPase proteolipid subunit"/>
    <property type="match status" value="1"/>
</dbReference>
<dbReference type="Gene3D" id="1.20.120.610">
    <property type="entry name" value="lithium bound rotor ring of v- atpase"/>
    <property type="match status" value="1"/>
</dbReference>
<dbReference type="InterPro" id="IPR002379">
    <property type="entry name" value="ATPase_proteolipid_c-like_dom"/>
</dbReference>
<dbReference type="InterPro" id="IPR000245">
    <property type="entry name" value="ATPase_proteolipid_csu"/>
</dbReference>
<dbReference type="InterPro" id="IPR035921">
    <property type="entry name" value="F/V-ATP_Csub_sf"/>
</dbReference>
<dbReference type="PANTHER" id="PTHR10263">
    <property type="entry name" value="V-TYPE PROTON ATPASE PROTEOLIPID SUBUNIT"/>
    <property type="match status" value="1"/>
</dbReference>
<dbReference type="Pfam" id="PF00137">
    <property type="entry name" value="ATP-synt_C"/>
    <property type="match status" value="2"/>
</dbReference>
<dbReference type="PRINTS" id="PR00122">
    <property type="entry name" value="VACATPASE"/>
</dbReference>
<dbReference type="SUPFAM" id="SSF81333">
    <property type="entry name" value="F1F0 ATP synthase subunit C"/>
    <property type="match status" value="2"/>
</dbReference>
<organism>
    <name type="scientific">Arabidopsis thaliana</name>
    <name type="common">Mouse-ear cress</name>
    <dbReference type="NCBI Taxonomy" id="3702"/>
    <lineage>
        <taxon>Eukaryota</taxon>
        <taxon>Viridiplantae</taxon>
        <taxon>Streptophyta</taxon>
        <taxon>Embryophyta</taxon>
        <taxon>Tracheophyta</taxon>
        <taxon>Spermatophyta</taxon>
        <taxon>Magnoliopsida</taxon>
        <taxon>eudicotyledons</taxon>
        <taxon>Gunneridae</taxon>
        <taxon>Pentapetalae</taxon>
        <taxon>rosids</taxon>
        <taxon>malvids</taxon>
        <taxon>Brassicales</taxon>
        <taxon>Brassicaceae</taxon>
        <taxon>Camelineae</taxon>
        <taxon>Arabidopsis</taxon>
    </lineage>
</organism>
<keyword id="KW-0256">Endoplasmic reticulum</keyword>
<keyword id="KW-0333">Golgi apparatus</keyword>
<keyword id="KW-0375">Hydrogen ion transport</keyword>
<keyword id="KW-0406">Ion transport</keyword>
<keyword id="KW-0472">Membrane</keyword>
<keyword id="KW-1185">Reference proteome</keyword>
<keyword id="KW-0812">Transmembrane</keyword>
<keyword id="KW-1133">Transmembrane helix</keyword>
<keyword id="KW-0813">Transport</keyword>
<comment type="function">
    <text evidence="1">Proton-conducting pore forming subunit of the membrane integral V0 complex of vacuolar ATPase. V-ATPase is responsible for acidifying a variety of intracellular compartments in eukaryotic cells (By similarity).</text>
</comment>
<comment type="subunit">
    <text evidence="1 4">V-ATPase is a heteromultimeric enzyme composed of a peripheral catalytic V1 complex (components A to H) attached to an integral membrane V0 proton pore complex (components: a, c, c'', d and e). The proteolipid components c and c'' are present as a hexameric ring that forms the proton-conducting pore (By similarity). Interacts with APD2 (PubMed:22897245).</text>
</comment>
<comment type="subcellular location">
    <subcellularLocation>
        <location evidence="3">Endoplasmic reticulum membrane</location>
        <topology evidence="3">Multi-pass membrane protein</topology>
    </subcellularLocation>
    <subcellularLocation>
        <location evidence="3">Golgi apparatus membrane</location>
        <topology evidence="3">Multi-pass membrane protein</topology>
    </subcellularLocation>
</comment>
<comment type="similarity">
    <text evidence="5">Belongs to the V-ATPase proteolipid subunit family.</text>
</comment>